<protein>
    <recommendedName>
        <fullName evidence="1">23S rRNA (uracil(747)-C(5))-methyltransferase RlmC</fullName>
        <ecNumber evidence="1">2.1.1.189</ecNumber>
    </recommendedName>
    <alternativeName>
        <fullName evidence="1">23S rRNA(m5U747)-methyltransferase</fullName>
    </alternativeName>
</protein>
<proteinExistence type="inferred from homology"/>
<organism>
    <name type="scientific">Edwardsiella ictaluri (strain 93-146)</name>
    <dbReference type="NCBI Taxonomy" id="634503"/>
    <lineage>
        <taxon>Bacteria</taxon>
        <taxon>Pseudomonadati</taxon>
        <taxon>Pseudomonadota</taxon>
        <taxon>Gammaproteobacteria</taxon>
        <taxon>Enterobacterales</taxon>
        <taxon>Hafniaceae</taxon>
        <taxon>Edwardsiella</taxon>
    </lineage>
</organism>
<feature type="chain" id="PRO_0000414818" description="23S rRNA (uracil(747)-C(5))-methyltransferase RlmC">
    <location>
        <begin position="1"/>
        <end position="377"/>
    </location>
</feature>
<feature type="active site" description="Nucleophile" evidence="1">
    <location>
        <position position="334"/>
    </location>
</feature>
<feature type="binding site" evidence="1">
    <location>
        <position position="3"/>
    </location>
    <ligand>
        <name>[4Fe-4S] cluster</name>
        <dbReference type="ChEBI" id="CHEBI:49883"/>
    </ligand>
</feature>
<feature type="binding site" evidence="1">
    <location>
        <position position="11"/>
    </location>
    <ligand>
        <name>[4Fe-4S] cluster</name>
        <dbReference type="ChEBI" id="CHEBI:49883"/>
    </ligand>
</feature>
<feature type="binding site" evidence="1">
    <location>
        <position position="14"/>
    </location>
    <ligand>
        <name>[4Fe-4S] cluster</name>
        <dbReference type="ChEBI" id="CHEBI:49883"/>
    </ligand>
</feature>
<feature type="binding site" evidence="1">
    <location>
        <position position="87"/>
    </location>
    <ligand>
        <name>[4Fe-4S] cluster</name>
        <dbReference type="ChEBI" id="CHEBI:49883"/>
    </ligand>
</feature>
<feature type="binding site" evidence="1">
    <location>
        <position position="212"/>
    </location>
    <ligand>
        <name>S-adenosyl-L-methionine</name>
        <dbReference type="ChEBI" id="CHEBI:59789"/>
    </ligand>
</feature>
<feature type="binding site" evidence="1">
    <location>
        <position position="241"/>
    </location>
    <ligand>
        <name>S-adenosyl-L-methionine</name>
        <dbReference type="ChEBI" id="CHEBI:59789"/>
    </ligand>
</feature>
<feature type="binding site" evidence="1">
    <location>
        <position position="262"/>
    </location>
    <ligand>
        <name>S-adenosyl-L-methionine</name>
        <dbReference type="ChEBI" id="CHEBI:59789"/>
    </ligand>
</feature>
<feature type="binding site" evidence="1">
    <location>
        <position position="307"/>
    </location>
    <ligand>
        <name>S-adenosyl-L-methionine</name>
        <dbReference type="ChEBI" id="CHEBI:59789"/>
    </ligand>
</feature>
<keyword id="KW-0004">4Fe-4S</keyword>
<keyword id="KW-0408">Iron</keyword>
<keyword id="KW-0411">Iron-sulfur</keyword>
<keyword id="KW-0479">Metal-binding</keyword>
<keyword id="KW-0489">Methyltransferase</keyword>
<keyword id="KW-0698">rRNA processing</keyword>
<keyword id="KW-0949">S-adenosyl-L-methionine</keyword>
<keyword id="KW-0808">Transferase</keyword>
<evidence type="ECO:0000255" key="1">
    <source>
        <dbReference type="HAMAP-Rule" id="MF_01012"/>
    </source>
</evidence>
<dbReference type="EC" id="2.1.1.189" evidence="1"/>
<dbReference type="EMBL" id="CP001600">
    <property type="protein sequence ID" value="ACR69694.1"/>
    <property type="molecule type" value="Genomic_DNA"/>
</dbReference>
<dbReference type="RefSeq" id="WP_015871805.1">
    <property type="nucleotide sequence ID" value="NZ_CP169062.1"/>
</dbReference>
<dbReference type="SMR" id="C5BED3"/>
<dbReference type="STRING" id="67780.B6E78_04740"/>
<dbReference type="GeneID" id="69539438"/>
<dbReference type="KEGG" id="eic:NT01EI_2524"/>
<dbReference type="PATRIC" id="fig|634503.3.peg.2246"/>
<dbReference type="HOGENOM" id="CLU_014689_0_0_6"/>
<dbReference type="OrthoDB" id="9804590at2"/>
<dbReference type="Proteomes" id="UP000001485">
    <property type="component" value="Chromosome"/>
</dbReference>
<dbReference type="GO" id="GO:0051539">
    <property type="term" value="F:4 iron, 4 sulfur cluster binding"/>
    <property type="evidence" value="ECO:0007669"/>
    <property type="project" value="UniProtKB-KW"/>
</dbReference>
<dbReference type="GO" id="GO:0005506">
    <property type="term" value="F:iron ion binding"/>
    <property type="evidence" value="ECO:0007669"/>
    <property type="project" value="UniProtKB-UniRule"/>
</dbReference>
<dbReference type="GO" id="GO:0070041">
    <property type="term" value="F:rRNA (uridine-C5-)-methyltransferase activity"/>
    <property type="evidence" value="ECO:0007669"/>
    <property type="project" value="UniProtKB-UniRule"/>
</dbReference>
<dbReference type="GO" id="GO:0070475">
    <property type="term" value="P:rRNA base methylation"/>
    <property type="evidence" value="ECO:0007669"/>
    <property type="project" value="TreeGrafter"/>
</dbReference>
<dbReference type="CDD" id="cd02440">
    <property type="entry name" value="AdoMet_MTases"/>
    <property type="match status" value="1"/>
</dbReference>
<dbReference type="FunFam" id="2.40.50.1070:FF:000002">
    <property type="entry name" value="23S rRNA (uracil(747)-C(5))-methyltransferase RlmC"/>
    <property type="match status" value="1"/>
</dbReference>
<dbReference type="Gene3D" id="2.40.50.1070">
    <property type="match status" value="1"/>
</dbReference>
<dbReference type="Gene3D" id="3.40.50.150">
    <property type="entry name" value="Vaccinia Virus protein VP39"/>
    <property type="match status" value="1"/>
</dbReference>
<dbReference type="HAMAP" id="MF_01012">
    <property type="entry name" value="23SrRNA_methyltr_RlmC"/>
    <property type="match status" value="1"/>
</dbReference>
<dbReference type="InterPro" id="IPR011825">
    <property type="entry name" value="23SrRNA_MeTrfase_RlmC"/>
</dbReference>
<dbReference type="InterPro" id="IPR030390">
    <property type="entry name" value="MeTrfase_TrmA_AS"/>
</dbReference>
<dbReference type="InterPro" id="IPR030391">
    <property type="entry name" value="MeTrfase_TrmA_CS"/>
</dbReference>
<dbReference type="InterPro" id="IPR029063">
    <property type="entry name" value="SAM-dependent_MTases_sf"/>
</dbReference>
<dbReference type="InterPro" id="IPR010280">
    <property type="entry name" value="U5_MeTrfase_fam"/>
</dbReference>
<dbReference type="NCBIfam" id="TIGR02085">
    <property type="entry name" value="meth_trns_rumB"/>
    <property type="match status" value="1"/>
</dbReference>
<dbReference type="NCBIfam" id="TIGR00479">
    <property type="entry name" value="rumA"/>
    <property type="match status" value="1"/>
</dbReference>
<dbReference type="PANTHER" id="PTHR11061">
    <property type="entry name" value="RNA M5U METHYLTRANSFERASE"/>
    <property type="match status" value="1"/>
</dbReference>
<dbReference type="PANTHER" id="PTHR11061:SF30">
    <property type="entry name" value="TRNA (URACIL(54)-C(5))-METHYLTRANSFERASE"/>
    <property type="match status" value="1"/>
</dbReference>
<dbReference type="Pfam" id="PF05958">
    <property type="entry name" value="tRNA_U5-meth_tr"/>
    <property type="match status" value="1"/>
</dbReference>
<dbReference type="SUPFAM" id="SSF53335">
    <property type="entry name" value="S-adenosyl-L-methionine-dependent methyltransferases"/>
    <property type="match status" value="1"/>
</dbReference>
<dbReference type="PROSITE" id="PS51687">
    <property type="entry name" value="SAM_MT_RNA_M5U"/>
    <property type="match status" value="1"/>
</dbReference>
<dbReference type="PROSITE" id="PS01230">
    <property type="entry name" value="TRMA_1"/>
    <property type="match status" value="1"/>
</dbReference>
<dbReference type="PROSITE" id="PS01231">
    <property type="entry name" value="TRMA_2"/>
    <property type="match status" value="1"/>
</dbReference>
<gene>
    <name evidence="1" type="primary">rlmC</name>
    <name type="ordered locus">NT01EI_2524</name>
</gene>
<accession>C5BED3</accession>
<sequence>MHCVQYQAGRCHSCQWLSIPYSRQLEDKQRHLSALLSGHSVAQWLSAQPSAELAMRNKAKMVVSGSVERPLLGMLQRDGSGVDLCDCPLYPDSFAVVFAALKSFIPRAGLTPYSVARRRGELKYLLLTESRLNGEMMLRFVLRSETKLAQLRQALPWLQAQLPQLAVISVNIQPVHMAILEGEREIFLTSQQVLSESFNGVPLYIRPQSFFQTNPAVAQALYAQARDWVQALGVTEMWDLFCGVGGFGLHCATPEMTLTGIEISAGAIACARRSAAQLGLTKVSFAALDSGAFADAHSAVPQLVLVNPPRRGIGAALCDYMNRMAPPYILYSSCNAQSMVQDIERLADYRIEKVRLFDMFPHTAHYEVLTLLVRASA</sequence>
<comment type="function">
    <text evidence="1">Catalyzes the formation of 5-methyl-uridine at position 747 (m5U747) in 23S rRNA.</text>
</comment>
<comment type="catalytic activity">
    <reaction evidence="1">
        <text>uridine(747) in 23S rRNA + S-adenosyl-L-methionine = 5-methyluridine(747) in 23S rRNA + S-adenosyl-L-homocysteine + H(+)</text>
        <dbReference type="Rhea" id="RHEA:42628"/>
        <dbReference type="Rhea" id="RHEA-COMP:10154"/>
        <dbReference type="Rhea" id="RHEA-COMP:10155"/>
        <dbReference type="ChEBI" id="CHEBI:15378"/>
        <dbReference type="ChEBI" id="CHEBI:57856"/>
        <dbReference type="ChEBI" id="CHEBI:59789"/>
        <dbReference type="ChEBI" id="CHEBI:65315"/>
        <dbReference type="ChEBI" id="CHEBI:74447"/>
        <dbReference type="EC" id="2.1.1.189"/>
    </reaction>
</comment>
<comment type="similarity">
    <text evidence="1">Belongs to the class I-like SAM-binding methyltransferase superfamily. RNA M5U methyltransferase family. RlmC subfamily.</text>
</comment>
<name>RLMC_EDWI9</name>
<reference key="1">
    <citation type="submission" date="2009-03" db="EMBL/GenBank/DDBJ databases">
        <title>Complete genome sequence of Edwardsiella ictaluri 93-146.</title>
        <authorList>
            <person name="Williams M.L."/>
            <person name="Gillaspy A.F."/>
            <person name="Dyer D.W."/>
            <person name="Thune R.L."/>
            <person name="Waldbieser G.C."/>
            <person name="Schuster S.C."/>
            <person name="Gipson J."/>
            <person name="Zaitshik J."/>
            <person name="Landry C."/>
            <person name="Lawrence M.L."/>
        </authorList>
    </citation>
    <scope>NUCLEOTIDE SEQUENCE [LARGE SCALE GENOMIC DNA]</scope>
    <source>
        <strain>93-146</strain>
    </source>
</reference>